<gene>
    <name evidence="1" type="primary">uvrC</name>
    <name type="ordered locus">SSPA0861</name>
</gene>
<reference key="1">
    <citation type="journal article" date="2009" name="BMC Genomics">
        <title>Pseudogene accumulation in the evolutionary histories of Salmonella enterica serovars Paratyphi A and Typhi.</title>
        <authorList>
            <person name="Holt K.E."/>
            <person name="Thomson N.R."/>
            <person name="Wain J."/>
            <person name="Langridge G.C."/>
            <person name="Hasan R."/>
            <person name="Bhutta Z.A."/>
            <person name="Quail M.A."/>
            <person name="Norbertczak H."/>
            <person name="Walker D."/>
            <person name="Simmonds M."/>
            <person name="White B."/>
            <person name="Bason N."/>
            <person name="Mungall K."/>
            <person name="Dougan G."/>
            <person name="Parkhill J."/>
        </authorList>
    </citation>
    <scope>NUCLEOTIDE SEQUENCE [LARGE SCALE GENOMIC DNA]</scope>
    <source>
        <strain>AKU_12601</strain>
    </source>
</reference>
<name>UVRC_SALPK</name>
<organism>
    <name type="scientific">Salmonella paratyphi A (strain AKU_12601)</name>
    <dbReference type="NCBI Taxonomy" id="554290"/>
    <lineage>
        <taxon>Bacteria</taxon>
        <taxon>Pseudomonadati</taxon>
        <taxon>Pseudomonadota</taxon>
        <taxon>Gammaproteobacteria</taxon>
        <taxon>Enterobacterales</taxon>
        <taxon>Enterobacteriaceae</taxon>
        <taxon>Salmonella</taxon>
    </lineage>
</organism>
<protein>
    <recommendedName>
        <fullName evidence="1">UvrABC system protein C</fullName>
        <shortName evidence="1">Protein UvrC</shortName>
    </recommendedName>
    <alternativeName>
        <fullName evidence="1">Excinuclease ABC subunit C</fullName>
    </alternativeName>
</protein>
<keyword id="KW-0963">Cytoplasm</keyword>
<keyword id="KW-0227">DNA damage</keyword>
<keyword id="KW-0228">DNA excision</keyword>
<keyword id="KW-0234">DNA repair</keyword>
<keyword id="KW-0267">Excision nuclease</keyword>
<keyword id="KW-0742">SOS response</keyword>
<evidence type="ECO:0000255" key="1">
    <source>
        <dbReference type="HAMAP-Rule" id="MF_00203"/>
    </source>
</evidence>
<proteinExistence type="inferred from homology"/>
<comment type="function">
    <text evidence="1">The UvrABC repair system catalyzes the recognition and processing of DNA lesions. UvrC both incises the 5' and 3' sides of the lesion. The N-terminal half is responsible for the 3' incision and the C-terminal half is responsible for the 5' incision.</text>
</comment>
<comment type="subunit">
    <text evidence="1">Interacts with UvrB in an incision complex.</text>
</comment>
<comment type="subcellular location">
    <subcellularLocation>
        <location evidence="1">Cytoplasm</location>
    </subcellularLocation>
</comment>
<comment type="similarity">
    <text evidence="1">Belongs to the UvrC family.</text>
</comment>
<sequence>MSEIFDAKAFLKTVTSQPGVYRMYDAGGTVIYVGKAKDLKKRLSSYFRSNLASRKTEALVAQIQHIDVTVTHTETEALLLEHNYIKLYQPRYNVLLRDDKSYPFIFLSGDTHPRLAMHRGAKHAKGEYFGPFPNGYAVRETLALLQKIFPIRQCENSVYRNRSRPCLQYQIGRCLGPCVAGLVSEEEYTQQVEYVRLFLSGKDDQVLTQLIARMEKASQDLAFEEAARIRDQIQAVRRVTEKQFVSNAGDDLDVIGVAFDAGMACVHVLFIRQGKVLGSRSYFPKVPGGTELGEVVETFVGQFYLQGSQMRTLPGEILLDFNLSDKTLLADSLSELAGRRIHVQTKPRGDRARYLKLARTNAATALITKLSQQSTITQRLTALAAVLKLPAIKRMECFDISHTMGEQTVASCVVFDANGPLRAEYRRYNIAGITPGDDYAAMNQVLRRRYGKAIEESKIPDVILIDGGKGQLAQAKAVFAELDVPWDKHCPLLLGVAKGADRKAGLETLFFEPEGEGFSLPPDSPALHVIQHIRDESHDHAIGGHRKKRAKVKNTSTLETIEGVGPKRRQMLLKYMGGLQGLRNASVEEIAKVPGISQGLAEKIFWSLKH</sequence>
<accession>B5BGC1</accession>
<feature type="chain" id="PRO_1000099517" description="UvrABC system protein C">
    <location>
        <begin position="1"/>
        <end position="610"/>
    </location>
</feature>
<feature type="domain" description="GIY-YIG" evidence="1">
    <location>
        <begin position="16"/>
        <end position="94"/>
    </location>
</feature>
<feature type="domain" description="UVR" evidence="1">
    <location>
        <begin position="204"/>
        <end position="239"/>
    </location>
</feature>
<dbReference type="EMBL" id="FM200053">
    <property type="protein sequence ID" value="CAR59004.1"/>
    <property type="molecule type" value="Genomic_DNA"/>
</dbReference>
<dbReference type="RefSeq" id="WP_001289471.1">
    <property type="nucleotide sequence ID" value="NC_011147.1"/>
</dbReference>
<dbReference type="SMR" id="B5BGC1"/>
<dbReference type="KEGG" id="sek:SSPA0861"/>
<dbReference type="HOGENOM" id="CLU_014841_3_0_6"/>
<dbReference type="Proteomes" id="UP000001869">
    <property type="component" value="Chromosome"/>
</dbReference>
<dbReference type="GO" id="GO:0005737">
    <property type="term" value="C:cytoplasm"/>
    <property type="evidence" value="ECO:0007669"/>
    <property type="project" value="UniProtKB-SubCell"/>
</dbReference>
<dbReference type="GO" id="GO:0009380">
    <property type="term" value="C:excinuclease repair complex"/>
    <property type="evidence" value="ECO:0007669"/>
    <property type="project" value="InterPro"/>
</dbReference>
<dbReference type="GO" id="GO:0003677">
    <property type="term" value="F:DNA binding"/>
    <property type="evidence" value="ECO:0007669"/>
    <property type="project" value="UniProtKB-UniRule"/>
</dbReference>
<dbReference type="GO" id="GO:0009381">
    <property type="term" value="F:excinuclease ABC activity"/>
    <property type="evidence" value="ECO:0007669"/>
    <property type="project" value="UniProtKB-UniRule"/>
</dbReference>
<dbReference type="GO" id="GO:0006289">
    <property type="term" value="P:nucleotide-excision repair"/>
    <property type="evidence" value="ECO:0007669"/>
    <property type="project" value="UniProtKB-UniRule"/>
</dbReference>
<dbReference type="GO" id="GO:0009432">
    <property type="term" value="P:SOS response"/>
    <property type="evidence" value="ECO:0007669"/>
    <property type="project" value="UniProtKB-UniRule"/>
</dbReference>
<dbReference type="CDD" id="cd10434">
    <property type="entry name" value="GIY-YIG_UvrC_Cho"/>
    <property type="match status" value="1"/>
</dbReference>
<dbReference type="FunFam" id="1.10.150.20:FF:000005">
    <property type="entry name" value="UvrABC system protein C"/>
    <property type="match status" value="1"/>
</dbReference>
<dbReference type="FunFam" id="3.30.420.340:FF:000001">
    <property type="entry name" value="UvrABC system protein C"/>
    <property type="match status" value="1"/>
</dbReference>
<dbReference type="FunFam" id="3.40.1440.10:FF:000001">
    <property type="entry name" value="UvrABC system protein C"/>
    <property type="match status" value="1"/>
</dbReference>
<dbReference type="FunFam" id="4.10.860.10:FF:000002">
    <property type="entry name" value="UvrABC system protein C"/>
    <property type="match status" value="1"/>
</dbReference>
<dbReference type="Gene3D" id="1.10.150.20">
    <property type="entry name" value="5' to 3' exonuclease, C-terminal subdomain"/>
    <property type="match status" value="1"/>
</dbReference>
<dbReference type="Gene3D" id="3.40.1440.10">
    <property type="entry name" value="GIY-YIG endonuclease"/>
    <property type="match status" value="1"/>
</dbReference>
<dbReference type="Gene3D" id="4.10.860.10">
    <property type="entry name" value="UVR domain"/>
    <property type="match status" value="1"/>
</dbReference>
<dbReference type="Gene3D" id="3.30.420.340">
    <property type="entry name" value="UvrC, RNAse H endonuclease domain"/>
    <property type="match status" value="1"/>
</dbReference>
<dbReference type="HAMAP" id="MF_00203">
    <property type="entry name" value="UvrC"/>
    <property type="match status" value="1"/>
</dbReference>
<dbReference type="InterPro" id="IPR000305">
    <property type="entry name" value="GIY-YIG_endonuc"/>
</dbReference>
<dbReference type="InterPro" id="IPR035901">
    <property type="entry name" value="GIY-YIG_endonuc_sf"/>
</dbReference>
<dbReference type="InterPro" id="IPR047296">
    <property type="entry name" value="GIY-YIG_UvrC_Cho"/>
</dbReference>
<dbReference type="InterPro" id="IPR003583">
    <property type="entry name" value="Hlx-hairpin-Hlx_DNA-bd_motif"/>
</dbReference>
<dbReference type="InterPro" id="IPR010994">
    <property type="entry name" value="RuvA_2-like"/>
</dbReference>
<dbReference type="InterPro" id="IPR001943">
    <property type="entry name" value="UVR_dom"/>
</dbReference>
<dbReference type="InterPro" id="IPR036876">
    <property type="entry name" value="UVR_dom_sf"/>
</dbReference>
<dbReference type="InterPro" id="IPR050066">
    <property type="entry name" value="UvrABC_protein_C"/>
</dbReference>
<dbReference type="InterPro" id="IPR004791">
    <property type="entry name" value="UvrC"/>
</dbReference>
<dbReference type="InterPro" id="IPR001162">
    <property type="entry name" value="UvrC_RNase_H_dom"/>
</dbReference>
<dbReference type="InterPro" id="IPR038476">
    <property type="entry name" value="UvrC_RNase_H_dom_sf"/>
</dbReference>
<dbReference type="NCBIfam" id="NF001824">
    <property type="entry name" value="PRK00558.1-5"/>
    <property type="match status" value="1"/>
</dbReference>
<dbReference type="NCBIfam" id="TIGR00194">
    <property type="entry name" value="uvrC"/>
    <property type="match status" value="1"/>
</dbReference>
<dbReference type="PANTHER" id="PTHR30562:SF1">
    <property type="entry name" value="UVRABC SYSTEM PROTEIN C"/>
    <property type="match status" value="1"/>
</dbReference>
<dbReference type="PANTHER" id="PTHR30562">
    <property type="entry name" value="UVRC/OXIDOREDUCTASE"/>
    <property type="match status" value="1"/>
</dbReference>
<dbReference type="Pfam" id="PF01541">
    <property type="entry name" value="GIY-YIG"/>
    <property type="match status" value="1"/>
</dbReference>
<dbReference type="Pfam" id="PF14520">
    <property type="entry name" value="HHH_5"/>
    <property type="match status" value="1"/>
</dbReference>
<dbReference type="Pfam" id="PF02151">
    <property type="entry name" value="UVR"/>
    <property type="match status" value="1"/>
</dbReference>
<dbReference type="Pfam" id="PF22920">
    <property type="entry name" value="UvrC_RNaseH"/>
    <property type="match status" value="1"/>
</dbReference>
<dbReference type="Pfam" id="PF08459">
    <property type="entry name" value="UvrC_RNaseH_dom"/>
    <property type="match status" value="1"/>
</dbReference>
<dbReference type="SMART" id="SM00465">
    <property type="entry name" value="GIYc"/>
    <property type="match status" value="1"/>
</dbReference>
<dbReference type="SMART" id="SM00278">
    <property type="entry name" value="HhH1"/>
    <property type="match status" value="2"/>
</dbReference>
<dbReference type="SUPFAM" id="SSF46600">
    <property type="entry name" value="C-terminal UvrC-binding domain of UvrB"/>
    <property type="match status" value="1"/>
</dbReference>
<dbReference type="SUPFAM" id="SSF82771">
    <property type="entry name" value="GIY-YIG endonuclease"/>
    <property type="match status" value="1"/>
</dbReference>
<dbReference type="SUPFAM" id="SSF47781">
    <property type="entry name" value="RuvA domain 2-like"/>
    <property type="match status" value="1"/>
</dbReference>
<dbReference type="PROSITE" id="PS50164">
    <property type="entry name" value="GIY_YIG"/>
    <property type="match status" value="1"/>
</dbReference>
<dbReference type="PROSITE" id="PS50151">
    <property type="entry name" value="UVR"/>
    <property type="match status" value="1"/>
</dbReference>
<dbReference type="PROSITE" id="PS50165">
    <property type="entry name" value="UVRC"/>
    <property type="match status" value="1"/>
</dbReference>